<gene>
    <name evidence="1" type="primary">rimI</name>
    <name type="ordered locus">SF4404</name>
    <name type="ordered locus">S4676</name>
</gene>
<sequence>MNTISSLETTDLPAAYHIEQRAHAFPWSEKTFASNQGERYLNFQLTQNGKMAAFAITQVVLDEATLFNIAVDPDYQRQGLGRALLEHLIDELEKRGVATLWLEVRASNAAAIALYESLGFNEATIRRNYYPTTDGREDAIIMALPISM</sequence>
<keyword id="KW-0012">Acyltransferase</keyword>
<keyword id="KW-0963">Cytoplasm</keyword>
<keyword id="KW-1185">Reference proteome</keyword>
<keyword id="KW-0808">Transferase</keyword>
<organism>
    <name type="scientific">Shigella flexneri</name>
    <dbReference type="NCBI Taxonomy" id="623"/>
    <lineage>
        <taxon>Bacteria</taxon>
        <taxon>Pseudomonadati</taxon>
        <taxon>Pseudomonadota</taxon>
        <taxon>Gammaproteobacteria</taxon>
        <taxon>Enterobacterales</taxon>
        <taxon>Enterobacteriaceae</taxon>
        <taxon>Shigella</taxon>
    </lineage>
</organism>
<protein>
    <recommendedName>
        <fullName evidence="1">[Ribosomal protein bS18]-alanine N-acetyltransferase</fullName>
        <ecNumber evidence="1">2.3.1.266</ecNumber>
    </recommendedName>
</protein>
<name>RIMI_SHIFL</name>
<reference key="1">
    <citation type="journal article" date="2002" name="Nucleic Acids Res.">
        <title>Genome sequence of Shigella flexneri 2a: insights into pathogenicity through comparison with genomes of Escherichia coli K12 and O157.</title>
        <authorList>
            <person name="Jin Q."/>
            <person name="Yuan Z."/>
            <person name="Xu J."/>
            <person name="Wang Y."/>
            <person name="Shen Y."/>
            <person name="Lu W."/>
            <person name="Wang J."/>
            <person name="Liu H."/>
            <person name="Yang J."/>
            <person name="Yang F."/>
            <person name="Zhang X."/>
            <person name="Zhang J."/>
            <person name="Yang G."/>
            <person name="Wu H."/>
            <person name="Qu D."/>
            <person name="Dong J."/>
            <person name="Sun L."/>
            <person name="Xue Y."/>
            <person name="Zhao A."/>
            <person name="Gao Y."/>
            <person name="Zhu J."/>
            <person name="Kan B."/>
            <person name="Ding K."/>
            <person name="Chen S."/>
            <person name="Cheng H."/>
            <person name="Yao Z."/>
            <person name="He B."/>
            <person name="Chen R."/>
            <person name="Ma D."/>
            <person name="Qiang B."/>
            <person name="Wen Y."/>
            <person name="Hou Y."/>
            <person name="Yu J."/>
        </authorList>
    </citation>
    <scope>NUCLEOTIDE SEQUENCE [LARGE SCALE GENOMIC DNA]</scope>
    <source>
        <strain>301 / Serotype 2a</strain>
    </source>
</reference>
<reference key="2">
    <citation type="journal article" date="2003" name="Infect. Immun.">
        <title>Complete genome sequence and comparative genomics of Shigella flexneri serotype 2a strain 2457T.</title>
        <authorList>
            <person name="Wei J."/>
            <person name="Goldberg M.B."/>
            <person name="Burland V."/>
            <person name="Venkatesan M.M."/>
            <person name="Deng W."/>
            <person name="Fournier G."/>
            <person name="Mayhew G.F."/>
            <person name="Plunkett G. III"/>
            <person name="Rose D.J."/>
            <person name="Darling A."/>
            <person name="Mau B."/>
            <person name="Perna N.T."/>
            <person name="Payne S.M."/>
            <person name="Runyen-Janecky L.J."/>
            <person name="Zhou S."/>
            <person name="Schwartz D.C."/>
            <person name="Blattner F.R."/>
        </authorList>
    </citation>
    <scope>NUCLEOTIDE SEQUENCE [LARGE SCALE GENOMIC DNA]</scope>
    <source>
        <strain>ATCC 700930 / 2457T / Serotype 2a</strain>
    </source>
</reference>
<accession>P0A947</accession>
<accession>P09453</accession>
<proteinExistence type="inferred from homology"/>
<comment type="function">
    <text evidence="1">Acetylates the N-terminal alanine of ribosomal protein bS18.</text>
</comment>
<comment type="catalytic activity">
    <reaction evidence="1">
        <text>N-terminal L-alanyl-[ribosomal protein bS18] + acetyl-CoA = N-terminal N(alpha)-acetyl-L-alanyl-[ribosomal protein bS18] + CoA + H(+)</text>
        <dbReference type="Rhea" id="RHEA:43756"/>
        <dbReference type="Rhea" id="RHEA-COMP:10676"/>
        <dbReference type="Rhea" id="RHEA-COMP:10677"/>
        <dbReference type="ChEBI" id="CHEBI:15378"/>
        <dbReference type="ChEBI" id="CHEBI:57287"/>
        <dbReference type="ChEBI" id="CHEBI:57288"/>
        <dbReference type="ChEBI" id="CHEBI:64718"/>
        <dbReference type="ChEBI" id="CHEBI:83683"/>
        <dbReference type="EC" id="2.3.1.266"/>
    </reaction>
</comment>
<comment type="subcellular location">
    <subcellularLocation>
        <location evidence="1">Cytoplasm</location>
    </subcellularLocation>
</comment>
<comment type="similarity">
    <text evidence="1 2">Belongs to the acetyltransferase family. RimI subfamily.</text>
</comment>
<evidence type="ECO:0000255" key="1">
    <source>
        <dbReference type="HAMAP-Rule" id="MF_02210"/>
    </source>
</evidence>
<evidence type="ECO:0000305" key="2"/>
<feature type="chain" id="PRO_0000074566" description="[Ribosomal protein bS18]-alanine N-acetyltransferase">
    <location>
        <begin position="1"/>
        <end position="148"/>
    </location>
</feature>
<feature type="domain" description="N-acetyltransferase" evidence="1">
    <location>
        <begin position="2"/>
        <end position="147"/>
    </location>
</feature>
<feature type="active site" description="Proton acceptor" evidence="1">
    <location>
        <position position="103"/>
    </location>
</feature>
<feature type="active site" description="Proton donor" evidence="1">
    <location>
        <position position="115"/>
    </location>
</feature>
<feature type="binding site" evidence="1">
    <location>
        <begin position="69"/>
        <end position="71"/>
    </location>
    <ligand>
        <name>acetyl-CoA</name>
        <dbReference type="ChEBI" id="CHEBI:57288"/>
    </ligand>
</feature>
<feature type="binding site" evidence="1">
    <location>
        <position position="108"/>
    </location>
    <ligand>
        <name>acetyl-CoA</name>
        <dbReference type="ChEBI" id="CHEBI:57288"/>
    </ligand>
</feature>
<dbReference type="EC" id="2.3.1.266" evidence="1"/>
<dbReference type="EMBL" id="AE005674">
    <property type="protein sequence ID" value="AAN45819.1"/>
    <property type="molecule type" value="Genomic_DNA"/>
</dbReference>
<dbReference type="EMBL" id="AE014073">
    <property type="protein sequence ID" value="AAP19594.1"/>
    <property type="molecule type" value="Genomic_DNA"/>
</dbReference>
<dbReference type="RefSeq" id="NP_710112.1">
    <property type="nucleotide sequence ID" value="NC_004337.2"/>
</dbReference>
<dbReference type="RefSeq" id="WP_001092461.1">
    <property type="nucleotide sequence ID" value="NZ_WPGW01000013.1"/>
</dbReference>
<dbReference type="SMR" id="P0A947"/>
<dbReference type="STRING" id="198214.SF4404"/>
<dbReference type="PaxDb" id="198214-SF4404"/>
<dbReference type="GeneID" id="1023573"/>
<dbReference type="GeneID" id="75202945"/>
<dbReference type="KEGG" id="sfl:SF4404"/>
<dbReference type="KEGG" id="sfx:S4676"/>
<dbReference type="PATRIC" id="fig|198214.7.peg.5191"/>
<dbReference type="HOGENOM" id="CLU_013985_23_2_6"/>
<dbReference type="Proteomes" id="UP000001006">
    <property type="component" value="Chromosome"/>
</dbReference>
<dbReference type="Proteomes" id="UP000002673">
    <property type="component" value="Chromosome"/>
</dbReference>
<dbReference type="GO" id="GO:0005737">
    <property type="term" value="C:cytoplasm"/>
    <property type="evidence" value="ECO:0007669"/>
    <property type="project" value="UniProtKB-SubCell"/>
</dbReference>
<dbReference type="GO" id="GO:0008999">
    <property type="term" value="F:protein-N-terminal-alanine acetyltransferase activity"/>
    <property type="evidence" value="ECO:0007669"/>
    <property type="project" value="UniProtKB-UniRule"/>
</dbReference>
<dbReference type="CDD" id="cd04301">
    <property type="entry name" value="NAT_SF"/>
    <property type="match status" value="1"/>
</dbReference>
<dbReference type="FunFam" id="3.40.630.30:FF:000018">
    <property type="entry name" value="[Ribosomal protein S18]-alanine N-acetyltransferase"/>
    <property type="match status" value="1"/>
</dbReference>
<dbReference type="Gene3D" id="3.40.630.30">
    <property type="match status" value="1"/>
</dbReference>
<dbReference type="HAMAP" id="MF_02210">
    <property type="entry name" value="RimI"/>
    <property type="match status" value="1"/>
</dbReference>
<dbReference type="InterPro" id="IPR006464">
    <property type="entry name" value="AcTrfase_RimI/Ard1"/>
</dbReference>
<dbReference type="InterPro" id="IPR016181">
    <property type="entry name" value="Acyl_CoA_acyltransferase"/>
</dbReference>
<dbReference type="InterPro" id="IPR000182">
    <property type="entry name" value="GNAT_dom"/>
</dbReference>
<dbReference type="InterPro" id="IPR043690">
    <property type="entry name" value="RimI"/>
</dbReference>
<dbReference type="InterPro" id="IPR050680">
    <property type="entry name" value="YpeA/RimI_acetyltransf"/>
</dbReference>
<dbReference type="NCBIfam" id="NF007025">
    <property type="entry name" value="PRK09491.1"/>
    <property type="match status" value="1"/>
</dbReference>
<dbReference type="NCBIfam" id="TIGR01575">
    <property type="entry name" value="rimI"/>
    <property type="match status" value="1"/>
</dbReference>
<dbReference type="PANTHER" id="PTHR43420">
    <property type="entry name" value="ACETYLTRANSFERASE"/>
    <property type="match status" value="1"/>
</dbReference>
<dbReference type="PANTHER" id="PTHR43420:SF51">
    <property type="entry name" value="PEPTIDYL-LYSINE N-ACETYLTRANSFERASE YIAC"/>
    <property type="match status" value="1"/>
</dbReference>
<dbReference type="Pfam" id="PF00583">
    <property type="entry name" value="Acetyltransf_1"/>
    <property type="match status" value="1"/>
</dbReference>
<dbReference type="SUPFAM" id="SSF55729">
    <property type="entry name" value="Acyl-CoA N-acyltransferases (Nat)"/>
    <property type="match status" value="1"/>
</dbReference>
<dbReference type="PROSITE" id="PS51186">
    <property type="entry name" value="GNAT"/>
    <property type="match status" value="1"/>
</dbReference>